<dbReference type="EC" id="2.7.11.1" evidence="3 4"/>
<dbReference type="EMBL" id="LN999946">
    <property type="protein sequence ID" value="CZU00141.1"/>
    <property type="molecule type" value="Genomic_DNA"/>
</dbReference>
<dbReference type="RefSeq" id="XP_001348597.1">
    <property type="nucleotide sequence ID" value="XM_001348561.1"/>
</dbReference>
<dbReference type="SMR" id="Q8IL26"/>
<dbReference type="FunCoup" id="Q8IL26">
    <property type="interactions" value="47"/>
</dbReference>
<dbReference type="STRING" id="36329.Q8IL26"/>
<dbReference type="PaxDb" id="5833-PF14_0423"/>
<dbReference type="EnsemblProtists" id="CZU00141">
    <property type="protein sequence ID" value="CZU00141"/>
    <property type="gene ID" value="PF3D7_1444500"/>
</dbReference>
<dbReference type="GeneID" id="812005"/>
<dbReference type="KEGG" id="pfa:PF3D7_1444500"/>
<dbReference type="VEuPathDB" id="PlasmoDB:PF3D7_1444500"/>
<dbReference type="HOGENOM" id="CLU_247519_0_0_1"/>
<dbReference type="InParanoid" id="Q8IL26"/>
<dbReference type="OMA" id="HELRYAD"/>
<dbReference type="OrthoDB" id="341578at2759"/>
<dbReference type="PhylomeDB" id="Q8IL26"/>
<dbReference type="Proteomes" id="UP000001450">
    <property type="component" value="Chromosome 14"/>
</dbReference>
<dbReference type="GO" id="GO:0005737">
    <property type="term" value="C:cytoplasm"/>
    <property type="evidence" value="ECO:0000318"/>
    <property type="project" value="GO_Central"/>
</dbReference>
<dbReference type="GO" id="GO:0005634">
    <property type="term" value="C:nucleus"/>
    <property type="evidence" value="ECO:0000318"/>
    <property type="project" value="GO_Central"/>
</dbReference>
<dbReference type="GO" id="GO:0005524">
    <property type="term" value="F:ATP binding"/>
    <property type="evidence" value="ECO:0000250"/>
    <property type="project" value="GeneDB"/>
</dbReference>
<dbReference type="GO" id="GO:0003824">
    <property type="term" value="F:catalytic activity"/>
    <property type="evidence" value="ECO:0000314"/>
    <property type="project" value="GeneDB"/>
</dbReference>
<dbReference type="GO" id="GO:0004672">
    <property type="term" value="F:protein kinase activity"/>
    <property type="evidence" value="ECO:0000314"/>
    <property type="project" value="GeneDB"/>
</dbReference>
<dbReference type="GO" id="GO:0106310">
    <property type="term" value="F:protein serine kinase activity"/>
    <property type="evidence" value="ECO:0007669"/>
    <property type="project" value="RHEA"/>
</dbReference>
<dbReference type="GO" id="GO:0004674">
    <property type="term" value="F:protein serine/threonine kinase activity"/>
    <property type="evidence" value="ECO:0007669"/>
    <property type="project" value="UniProtKB-KW"/>
</dbReference>
<dbReference type="GO" id="GO:0017148">
    <property type="term" value="P:negative regulation of translation"/>
    <property type="evidence" value="ECO:0007669"/>
    <property type="project" value="UniProtKB-KW"/>
</dbReference>
<dbReference type="GO" id="GO:0010608">
    <property type="term" value="P:post-transcriptional regulation of gene expression"/>
    <property type="evidence" value="ECO:0000304"/>
    <property type="project" value="GeneDB"/>
</dbReference>
<dbReference type="GO" id="GO:0006468">
    <property type="term" value="P:protein phosphorylation"/>
    <property type="evidence" value="ECO:0000314"/>
    <property type="project" value="GeneDB"/>
</dbReference>
<dbReference type="GO" id="GO:0042594">
    <property type="term" value="P:response to starvation"/>
    <property type="evidence" value="ECO:0000314"/>
    <property type="project" value="GeneDB"/>
</dbReference>
<dbReference type="CDD" id="cd13996">
    <property type="entry name" value="STKc_EIF2AK"/>
    <property type="match status" value="1"/>
</dbReference>
<dbReference type="FunFam" id="1.10.510.10:FF:001259">
    <property type="entry name" value="Eukaryotic initiation factor 2alpha kinase 1"/>
    <property type="match status" value="1"/>
</dbReference>
<dbReference type="FunFam" id="3.30.200.20:FF:000694">
    <property type="entry name" value="Eukaryotic initiation factor 2alpha kinase 1"/>
    <property type="match status" value="1"/>
</dbReference>
<dbReference type="Gene3D" id="3.30.200.20">
    <property type="entry name" value="Phosphorylase Kinase, domain 1"/>
    <property type="match status" value="1"/>
</dbReference>
<dbReference type="Gene3D" id="1.10.510.10">
    <property type="entry name" value="Transferase(Phosphotransferase) domain 1"/>
    <property type="match status" value="1"/>
</dbReference>
<dbReference type="InterPro" id="IPR050339">
    <property type="entry name" value="CC_SR_Kinase"/>
</dbReference>
<dbReference type="InterPro" id="IPR011009">
    <property type="entry name" value="Kinase-like_dom_sf"/>
</dbReference>
<dbReference type="InterPro" id="IPR000719">
    <property type="entry name" value="Prot_kinase_dom"/>
</dbReference>
<dbReference type="InterPro" id="IPR017441">
    <property type="entry name" value="Protein_kinase_ATP_BS"/>
</dbReference>
<dbReference type="InterPro" id="IPR008271">
    <property type="entry name" value="Ser/Thr_kinase_AS"/>
</dbReference>
<dbReference type="PANTHER" id="PTHR11042:SF178">
    <property type="entry name" value="EUKARYOTIC TRANSLATION INITIATION FACTOR 2-ALPHA KINASE 1"/>
    <property type="match status" value="1"/>
</dbReference>
<dbReference type="PANTHER" id="PTHR11042">
    <property type="entry name" value="EUKARYOTIC TRANSLATION INITIATION FACTOR 2-ALPHA KINASE EIF2-ALPHA KINASE -RELATED"/>
    <property type="match status" value="1"/>
</dbReference>
<dbReference type="Pfam" id="PF00069">
    <property type="entry name" value="Pkinase"/>
    <property type="match status" value="1"/>
</dbReference>
<dbReference type="SMART" id="SM00220">
    <property type="entry name" value="S_TKc"/>
    <property type="match status" value="1"/>
</dbReference>
<dbReference type="SUPFAM" id="SSF56112">
    <property type="entry name" value="Protein kinase-like (PK-like)"/>
    <property type="match status" value="1"/>
</dbReference>
<dbReference type="PROSITE" id="PS00107">
    <property type="entry name" value="PROTEIN_KINASE_ATP"/>
    <property type="match status" value="1"/>
</dbReference>
<dbReference type="PROSITE" id="PS50011">
    <property type="entry name" value="PROTEIN_KINASE_DOM"/>
    <property type="match status" value="1"/>
</dbReference>
<dbReference type="PROSITE" id="PS00108">
    <property type="entry name" value="PROTEIN_KINASE_ST"/>
    <property type="match status" value="1"/>
</dbReference>
<accession>Q8IL26</accession>
<organism evidence="9">
    <name type="scientific">Plasmodium falciparum (isolate 3D7)</name>
    <dbReference type="NCBI Taxonomy" id="36329"/>
    <lineage>
        <taxon>Eukaryota</taxon>
        <taxon>Sar</taxon>
        <taxon>Alveolata</taxon>
        <taxon>Apicomplexa</taxon>
        <taxon>Aconoidasida</taxon>
        <taxon>Haemosporida</taxon>
        <taxon>Plasmodiidae</taxon>
        <taxon>Plasmodium</taxon>
        <taxon>Plasmodium (Laverania)</taxon>
    </lineage>
</organism>
<reference evidence="9" key="1">
    <citation type="journal article" date="2002" name="Nature">
        <title>Genome sequence of the human malaria parasite Plasmodium falciparum.</title>
        <authorList>
            <person name="Gardner M.J."/>
            <person name="Hall N."/>
            <person name="Fung E."/>
            <person name="White O."/>
            <person name="Berriman M."/>
            <person name="Hyman R.W."/>
            <person name="Carlton J.M."/>
            <person name="Pain A."/>
            <person name="Nelson K.E."/>
            <person name="Bowman S."/>
            <person name="Paulsen I.T."/>
            <person name="James K.D."/>
            <person name="Eisen J.A."/>
            <person name="Rutherford K.M."/>
            <person name="Salzberg S.L."/>
            <person name="Craig A."/>
            <person name="Kyes S."/>
            <person name="Chan M.-S."/>
            <person name="Nene V."/>
            <person name="Shallom S.J."/>
            <person name="Suh B."/>
            <person name="Peterson J."/>
            <person name="Angiuoli S."/>
            <person name="Pertea M."/>
            <person name="Allen J."/>
            <person name="Selengut J."/>
            <person name="Haft D."/>
            <person name="Mather M.W."/>
            <person name="Vaidya A.B."/>
            <person name="Martin D.M.A."/>
            <person name="Fairlamb A.H."/>
            <person name="Fraunholz M.J."/>
            <person name="Roos D.S."/>
            <person name="Ralph S.A."/>
            <person name="McFadden G.I."/>
            <person name="Cummings L.M."/>
            <person name="Subramanian G.M."/>
            <person name="Mungall C."/>
            <person name="Venter J.C."/>
            <person name="Carucci D.J."/>
            <person name="Hoffman S.L."/>
            <person name="Newbold C."/>
            <person name="Davis R.W."/>
            <person name="Fraser C.M."/>
            <person name="Barrell B.G."/>
        </authorList>
    </citation>
    <scope>NUCLEOTIDE SEQUENCE [LARGE SCALE GENOMIC DNA]</scope>
    <source>
        <strain evidence="9">3D7</strain>
    </source>
</reference>
<reference evidence="7" key="2">
    <citation type="journal article" date="2009" name="Malar. J.">
        <title>PfeIK1, a eukaryotic initiation factor 2alpha kinase of the human malaria parasite Plasmodium falciparum, regulates stress-response to amino-acid starvation.</title>
        <authorList>
            <person name="Fennell C."/>
            <person name="Babbitt S."/>
            <person name="Russo I."/>
            <person name="Wilkes J."/>
            <person name="Ranford-Cartwright L."/>
            <person name="Goldberg D.E."/>
            <person name="Doerig C."/>
        </authorList>
    </citation>
    <scope>FUNCTION</scope>
    <scope>CATALYTIC ACTIVITY</scope>
    <scope>DISRUPTION PHENOTYPE</scope>
    <scope>MUTAGENESIS OF LYS-458</scope>
</reference>
<reference evidence="7" key="3">
    <citation type="journal article" date="2017" name="Cell Host Microbe">
        <title>Inhibiting the Plasmodium eIF2alpha Kinase PK4 Prevents Artemisinin-Induced Latency.</title>
        <authorList>
            <person name="Zhang M."/>
            <person name="Gallego-Delgado J."/>
            <person name="Fernandez-Arias C."/>
            <person name="Waters N.C."/>
            <person name="Rodriguez A."/>
            <person name="Tsuji M."/>
            <person name="Wek R.C."/>
            <person name="Nussenzweig V."/>
            <person name="Sullivan W.J. Jr."/>
        </authorList>
    </citation>
    <scope>FUNCTION</scope>
    <scope>CATALYTIC ACTIVITY</scope>
    <scope>PHOSPHORYLATION</scope>
</reference>
<reference evidence="7" key="4">
    <citation type="journal article" date="2020" name="J. Pineal Res.">
        <title>The Plasmodium falciparum eIK1 kinase (PfeIK1) is central for melatonin synchronization in the human malaria parasite. Melatotosil blocks melatonin action on parasite cell cycle.</title>
        <authorList>
            <person name="Dias B.K.M."/>
            <person name="Nakabashi M."/>
            <person name="Alves M.R.R."/>
            <person name="Portella D.P."/>
            <person name="Dos Santos B.M."/>
            <person name="Costa da Silva Almeida F."/>
            <person name="Ribeiro R.Y."/>
            <person name="Schuck D.C."/>
            <person name="Jordao A.K."/>
            <person name="Garcia C.R.S."/>
        </authorList>
    </citation>
    <scope>FUNCTION</scope>
    <scope>DEVELOPMENTAL STAGE</scope>
    <scope>INDUCTION</scope>
    <scope>DISRUPTION PHENOTYPE</scope>
</reference>
<comment type="function">
    <text evidence="3 4 5">In blood stage parasites, phosphorylates translation factor eIF2alpha in response to amino acid starvation (PubMed:19435497, PubMed:29241041). During the asexual blood stage, involved in the response to the host hormone melatonin which is used by the parasite to modulate its cell cycle (PubMed:32702775).</text>
</comment>
<comment type="catalytic activity">
    <reaction evidence="3 4">
        <text>L-seryl-[protein] + ATP = O-phospho-L-seryl-[protein] + ADP + H(+)</text>
        <dbReference type="Rhea" id="RHEA:17989"/>
        <dbReference type="Rhea" id="RHEA-COMP:9863"/>
        <dbReference type="Rhea" id="RHEA-COMP:11604"/>
        <dbReference type="ChEBI" id="CHEBI:15378"/>
        <dbReference type="ChEBI" id="CHEBI:29999"/>
        <dbReference type="ChEBI" id="CHEBI:30616"/>
        <dbReference type="ChEBI" id="CHEBI:83421"/>
        <dbReference type="ChEBI" id="CHEBI:456216"/>
        <dbReference type="EC" id="2.7.11.1"/>
    </reaction>
    <physiologicalReaction direction="left-to-right" evidence="3">
        <dbReference type="Rhea" id="RHEA:17990"/>
    </physiologicalReaction>
</comment>
<comment type="catalytic activity">
    <reaction evidence="7">
        <text>L-threonyl-[protein] + ATP = O-phospho-L-threonyl-[protein] + ADP + H(+)</text>
        <dbReference type="Rhea" id="RHEA:46608"/>
        <dbReference type="Rhea" id="RHEA-COMP:11060"/>
        <dbReference type="Rhea" id="RHEA-COMP:11605"/>
        <dbReference type="ChEBI" id="CHEBI:15378"/>
        <dbReference type="ChEBI" id="CHEBI:30013"/>
        <dbReference type="ChEBI" id="CHEBI:30616"/>
        <dbReference type="ChEBI" id="CHEBI:61977"/>
        <dbReference type="ChEBI" id="CHEBI:456216"/>
        <dbReference type="EC" id="2.7.11.1"/>
    </reaction>
    <physiologicalReaction direction="left-to-right" evidence="7">
        <dbReference type="Rhea" id="RHEA:46609"/>
    </physiologicalReaction>
</comment>
<comment type="developmental stage">
    <text evidence="5">Expressed during the asexual blood stage, including rings, trophozoites and schizonts.</text>
</comment>
<comment type="induction">
    <text evidence="5">Down-regulated at the ring stage by melatonin.</text>
</comment>
<comment type="PTM">
    <text evidence="4">Auto-phosphorylated.</text>
</comment>
<comment type="disruption phenotype">
    <text evidence="3 5">No defect in erythrocyte asexual growth and gametocytogenesis (PubMed:19435497). No defect in the production of sporozoites in the mosquito vector (PubMed:19435497). In blood stage parasites, phosphorylation of eIF2alpha in response to amino-acid starvation is impaired (PubMed:19435497). During the asexual blood stage, increased in parasitemia induced by host melatonin is impaired (PubMed:32702775).</text>
</comment>
<comment type="similarity">
    <text evidence="7">Belongs to the protein kinase superfamily. Ser/Thr protein kinase family. GCN2 subfamily.</text>
</comment>
<name>EIK1_PLAF7</name>
<protein>
    <recommendedName>
        <fullName evidence="6">Eukaryotic translation initiation factor 2-alpha kinase 1</fullName>
        <shortName evidence="6">PfeIK1</shortName>
        <shortName evidence="6">eIF2alpha kinase 1</shortName>
        <ecNumber evidence="3 4">2.7.11.1</ecNumber>
    </recommendedName>
</protein>
<evidence type="ECO:0000255" key="1">
    <source>
        <dbReference type="PROSITE-ProRule" id="PRU00159"/>
    </source>
</evidence>
<evidence type="ECO:0000256" key="2">
    <source>
        <dbReference type="SAM" id="MobiDB-lite"/>
    </source>
</evidence>
<evidence type="ECO:0000269" key="3">
    <source>
    </source>
</evidence>
<evidence type="ECO:0000269" key="4">
    <source>
    </source>
</evidence>
<evidence type="ECO:0000269" key="5">
    <source>
    </source>
</evidence>
<evidence type="ECO:0000303" key="6">
    <source>
    </source>
</evidence>
<evidence type="ECO:0000305" key="7"/>
<evidence type="ECO:0000312" key="8">
    <source>
        <dbReference type="EMBL" id="CZU00141.1"/>
    </source>
</evidence>
<evidence type="ECO:0000312" key="9">
    <source>
        <dbReference type="Proteomes" id="UP000001450"/>
    </source>
</evidence>
<keyword id="KW-0067">ATP-binding</keyword>
<keyword id="KW-0418">Kinase</keyword>
<keyword id="KW-0547">Nucleotide-binding</keyword>
<keyword id="KW-0597">Phosphoprotein</keyword>
<keyword id="KW-0652">Protein synthesis inhibitor</keyword>
<keyword id="KW-1185">Reference proteome</keyword>
<keyword id="KW-0723">Serine/threonine-protein kinase</keyword>
<keyword id="KW-0808">Transferase</keyword>
<gene>
    <name evidence="6" type="primary">eIK1</name>
    <name evidence="7" type="ORF">PF14_0423</name>
    <name evidence="8" type="ORF">PF3D7_1444500</name>
</gene>
<feature type="chain" id="PRO_0000456970" description="Eukaryotic translation initiation factor 2-alpha kinase 1">
    <location>
        <begin position="1"/>
        <end position="1558"/>
    </location>
</feature>
<feature type="domain" description="Protein kinase" evidence="1">
    <location>
        <begin position="429"/>
        <end position="789"/>
    </location>
</feature>
<feature type="region of interest" description="Disordered" evidence="2">
    <location>
        <begin position="1014"/>
        <end position="1033"/>
    </location>
</feature>
<feature type="active site" description="Proton acceptor" evidence="1">
    <location>
        <position position="660"/>
    </location>
</feature>
<feature type="binding site" evidence="1">
    <location>
        <begin position="435"/>
        <end position="443"/>
    </location>
    <ligand>
        <name>ATP</name>
        <dbReference type="ChEBI" id="CHEBI:30616"/>
    </ligand>
</feature>
<feature type="binding site" evidence="1">
    <location>
        <position position="458"/>
    </location>
    <ligand>
        <name>ATP</name>
        <dbReference type="ChEBI" id="CHEBI:30616"/>
    </ligand>
</feature>
<feature type="mutagenesis site" description="Loss of catalytic activity." evidence="3">
    <original>K</original>
    <variation>M</variation>
    <location>
        <position position="458"/>
    </location>
</feature>
<sequence length="1558" mass="184251">MTSEDKTALCAENILNDIYILTINRNIDIDIIQEGLLRKVMDEEESNSILFLEDSSFSKNDISILNVHLKIEDGKNKYNNYYEFKYADINVTIDFYQKECKYSIEKSNMHKCHYFKMMNKINYITEQKMDFKDSILYLYNTINDKNFFKCPCWLNDNKNIKLNNIINDHQQKKKKKNLYDKSVQVTNDVTNIMVNEIQEQKMKKPIFFDNKNDLNNSDDEFNSAHSSLIKINKLLNVEENDIFHNLKGHVYEEYFDKHEDNKNQKDNIESNIIVKDKKDRANNIISEQMKEDYIKNVEEVLSKHINNNKNNNVEDSVSLYSLDEEISEQIDKQHFFSIDKRQDEISNFIQMEENINDHMNDNINKMGKKKHGKENRVVEDEKYIQDDKKKKRFYRNVNDNIPLTVQLANKGNEICKEIIEMNSRYYRDFFEEKILGCGGFGYVMKVKNKKFNITYALKIIRLSNSKYNTQTNNKHINEKDNNSYIMEEAIMIAKLQHENIVRYYDAWVEENVDFFLYKELQNEFKNIKIKIKNEKMKNEKMKNEKIISGKIKNENIKSENIKSENIKSENIKSENIKSEKVKNLYIEEIKYFWNHYKKNKDPNVNDKYLYILMEYCPGKTLREAIDCGFICRNEKLIWELIKQILKGISYIHDMKIMHRDIKPSNIFLQITDNILIAKIGDFGLTTRIGDTQINPSAGTIHYISPEQLNGEPFNEKADIFSLGVVFFEMFHEPFSTSMERSITLSNLLKGIYPEYMKADNKKFQFLSSLLAINPQERCCAYNLLHESVLFTFEKDFTDIYNLIDNKRNCEEVHTIISTLFDKFEYLNSDKILKKEDFSTFQNAKIFTDDLEMRKKQKIIKKKILISLKKRGAIFILTPIILLNKYYINLENTYMEEYNIYYNINKKKENKINNIYINTNKNKNIDNLIYMLDIYGNSITLRNSFFLSFAEYIYESIDSYNKYNEDNLFYKFYTYGYTYKNQIIKSNKHIKKDTINNNINTTINITTTTCNTTTGTSTNNNNNNNNNNMGNNNIGNNMGNNVSNIISNNNINNHMISNNPFYFYNIYPDENEKMFYCILSSSKNVFGNEELNYLSIFSNADIMVSIYTLYNHINYFNKLLFVWSYIDLLEIILKECLDIPNDISYHLSIDLKKNSTLLVNKSFVMSLLQKYKIKDMSKISDHILSLFYIKCESNKVDDYLNNIYNFVDDLLNKKSSLQLKRNTSITPKEVPYVRSRSNNISTSASKIIKYDIQKNVGTKEKGNQNDNEKKKMQIYSILDRIKKINNFICTNTVINNTCFDLFLNYEESIFCNEVIFYVICESKNKEIIAYGGRFDEIIRNMANEVKYKNHANYKYVYNNIKDIYNNNNNNNNNDNNIMNIKAYGVEIYLDKIYSKVIESNEKISIHLQYNPSTDKSQLFKNFVTSCQQNDFACTSHIIQQPLLNDDYLNYSSTKILIQVYEISNLLIAYDLSKKLLTKNISSYTHLSINNVNIKKKIKNFKPHKIQFFITIKSNNTDNSFDALKPINFDNVVYKIVNYDDQDCNFMDQAELINYLIKYF</sequence>
<proteinExistence type="evidence at protein level"/>